<gene>
    <name type="ordered locus">AF_0269</name>
</gene>
<keyword id="KW-1185">Reference proteome</keyword>
<sequence>MMAKKLAIFLFNDDEMCMLHAFLYLRELNERGYEAKLIIEGKATVIPLKYAEGSIVSKHYK</sequence>
<proteinExistence type="predicted"/>
<protein>
    <recommendedName>
        <fullName>Uncharacterized protein AF_0269</fullName>
    </recommendedName>
</protein>
<name>Y269_ARCFU</name>
<reference key="1">
    <citation type="journal article" date="1997" name="Nature">
        <title>The complete genome sequence of the hyperthermophilic, sulphate-reducing archaeon Archaeoglobus fulgidus.</title>
        <authorList>
            <person name="Klenk H.-P."/>
            <person name="Clayton R.A."/>
            <person name="Tomb J.-F."/>
            <person name="White O."/>
            <person name="Nelson K.E."/>
            <person name="Ketchum K.A."/>
            <person name="Dodson R.J."/>
            <person name="Gwinn M.L."/>
            <person name="Hickey E.K."/>
            <person name="Peterson J.D."/>
            <person name="Richardson D.L."/>
            <person name="Kerlavage A.R."/>
            <person name="Graham D.E."/>
            <person name="Kyrpides N.C."/>
            <person name="Fleischmann R.D."/>
            <person name="Quackenbush J."/>
            <person name="Lee N.H."/>
            <person name="Sutton G.G."/>
            <person name="Gill S.R."/>
            <person name="Kirkness E.F."/>
            <person name="Dougherty B.A."/>
            <person name="McKenney K."/>
            <person name="Adams M.D."/>
            <person name="Loftus B.J."/>
            <person name="Peterson S.N."/>
            <person name="Reich C.I."/>
            <person name="McNeil L.K."/>
            <person name="Badger J.H."/>
            <person name="Glodek A."/>
            <person name="Zhou L."/>
            <person name="Overbeek R."/>
            <person name="Gocayne J.D."/>
            <person name="Weidman J.F."/>
            <person name="McDonald L.A."/>
            <person name="Utterback T.R."/>
            <person name="Cotton M.D."/>
            <person name="Spriggs T."/>
            <person name="Artiach P."/>
            <person name="Kaine B.P."/>
            <person name="Sykes S.M."/>
            <person name="Sadow P.W."/>
            <person name="D'Andrea K.P."/>
            <person name="Bowman C."/>
            <person name="Fujii C."/>
            <person name="Garland S.A."/>
            <person name="Mason T.M."/>
            <person name="Olsen G.J."/>
            <person name="Fraser C.M."/>
            <person name="Smith H.O."/>
            <person name="Woese C.R."/>
            <person name="Venter J.C."/>
        </authorList>
    </citation>
    <scope>NUCLEOTIDE SEQUENCE [LARGE SCALE GENOMIC DNA]</scope>
    <source>
        <strain>ATCC 49558 / DSM 4304 / JCM 9628 / NBRC 100126 / VC-16</strain>
    </source>
</reference>
<feature type="chain" id="PRO_0000127859" description="Uncharacterized protein AF_0269">
    <location>
        <begin position="1"/>
        <end position="61"/>
    </location>
</feature>
<accession>O29970</accession>
<organism>
    <name type="scientific">Archaeoglobus fulgidus (strain ATCC 49558 / DSM 4304 / JCM 9628 / NBRC 100126 / VC-16)</name>
    <dbReference type="NCBI Taxonomy" id="224325"/>
    <lineage>
        <taxon>Archaea</taxon>
        <taxon>Methanobacteriati</taxon>
        <taxon>Methanobacteriota</taxon>
        <taxon>Archaeoglobi</taxon>
        <taxon>Archaeoglobales</taxon>
        <taxon>Archaeoglobaceae</taxon>
        <taxon>Archaeoglobus</taxon>
    </lineage>
</organism>
<dbReference type="EMBL" id="AE000782">
    <property type="protein sequence ID" value="AAB90969.1"/>
    <property type="molecule type" value="Genomic_DNA"/>
</dbReference>
<dbReference type="PIR" id="E69283">
    <property type="entry name" value="E69283"/>
</dbReference>
<dbReference type="SMR" id="O29970"/>
<dbReference type="STRING" id="224325.AF_0269"/>
<dbReference type="PaxDb" id="224325-AF_0269"/>
<dbReference type="EnsemblBacteria" id="AAB90969">
    <property type="protein sequence ID" value="AAB90969"/>
    <property type="gene ID" value="AF_0269"/>
</dbReference>
<dbReference type="KEGG" id="afu:AF_0269"/>
<dbReference type="HOGENOM" id="CLU_2929994_0_0_2"/>
<dbReference type="Proteomes" id="UP000002199">
    <property type="component" value="Chromosome"/>
</dbReference>